<feature type="signal peptide" evidence="2">
    <location>
        <begin position="1"/>
        <end position="17"/>
    </location>
</feature>
<feature type="propeptide" id="PRO_0000383669" evidence="1 2">
    <location>
        <begin position="18"/>
        <end position="55"/>
    </location>
</feature>
<feature type="chain" id="PRO_0000383670" description="Defensin" evidence="1">
    <location>
        <begin position="56"/>
        <end position="95"/>
    </location>
</feature>
<feature type="disulfide bond" evidence="3">
    <location>
        <begin position="58"/>
        <end position="85"/>
    </location>
</feature>
<feature type="disulfide bond" evidence="3">
    <location>
        <begin position="71"/>
        <end position="91"/>
    </location>
</feature>
<feature type="disulfide bond" evidence="3">
    <location>
        <begin position="75"/>
        <end position="93"/>
    </location>
</feature>
<organism>
    <name type="scientific">Formica aquilonia</name>
    <name type="common">Red wood ant</name>
    <name type="synonym">Scottish wood ant</name>
    <dbReference type="NCBI Taxonomy" id="258703"/>
    <lineage>
        <taxon>Eukaryota</taxon>
        <taxon>Metazoa</taxon>
        <taxon>Ecdysozoa</taxon>
        <taxon>Arthropoda</taxon>
        <taxon>Hexapoda</taxon>
        <taxon>Insecta</taxon>
        <taxon>Pterygota</taxon>
        <taxon>Neoptera</taxon>
        <taxon>Endopterygota</taxon>
        <taxon>Hymenoptera</taxon>
        <taxon>Apocrita</taxon>
        <taxon>Aculeata</taxon>
        <taxon>Formicoidea</taxon>
        <taxon>Formicidae</taxon>
        <taxon>Formicinae</taxon>
        <taxon>Formica</taxon>
    </lineage>
</organism>
<reference evidence="4" key="1">
    <citation type="journal article" date="2005" name="Insect Mol. Biol.">
        <title>Identification and molecular characterization of defensin gene from the ant Formica aquilonia.</title>
        <authorList>
            <person name="Viljakainen L."/>
            <person name="Pamilo P."/>
        </authorList>
    </citation>
    <scope>NUCLEOTIDE SEQUENCE [GENOMIC DNA / MRNA]</scope>
</reference>
<proteinExistence type="inferred from homology"/>
<dbReference type="EMBL" id="AY875719">
    <property type="protein sequence ID" value="AAX20157.1"/>
    <property type="molecule type" value="mRNA"/>
</dbReference>
<dbReference type="EMBL" id="AY875720">
    <property type="protein sequence ID" value="AAX20158.1"/>
    <property type="molecule type" value="Genomic_DNA"/>
</dbReference>
<dbReference type="GO" id="GO:0005576">
    <property type="term" value="C:extracellular region"/>
    <property type="evidence" value="ECO:0000250"/>
    <property type="project" value="UniProtKB"/>
</dbReference>
<dbReference type="GO" id="GO:0005615">
    <property type="term" value="C:extracellular space"/>
    <property type="evidence" value="ECO:0007669"/>
    <property type="project" value="TreeGrafter"/>
</dbReference>
<dbReference type="GO" id="GO:0050829">
    <property type="term" value="P:defense response to Gram-negative bacterium"/>
    <property type="evidence" value="ECO:0000250"/>
    <property type="project" value="UniProtKB"/>
</dbReference>
<dbReference type="GO" id="GO:0050830">
    <property type="term" value="P:defense response to Gram-positive bacterium"/>
    <property type="evidence" value="ECO:0000250"/>
    <property type="project" value="UniProtKB"/>
</dbReference>
<dbReference type="GO" id="GO:0006959">
    <property type="term" value="P:humoral immune response"/>
    <property type="evidence" value="ECO:0007669"/>
    <property type="project" value="TreeGrafter"/>
</dbReference>
<dbReference type="GO" id="GO:0045087">
    <property type="term" value="P:innate immune response"/>
    <property type="evidence" value="ECO:0000250"/>
    <property type="project" value="UniProtKB"/>
</dbReference>
<dbReference type="CDD" id="cd21806">
    <property type="entry name" value="DEFL_defensin-like"/>
    <property type="match status" value="1"/>
</dbReference>
<dbReference type="FunFam" id="3.30.30.10:FF:000005">
    <property type="entry name" value="Defensin"/>
    <property type="match status" value="1"/>
</dbReference>
<dbReference type="Gene3D" id="3.30.30.10">
    <property type="entry name" value="Knottin, scorpion toxin-like"/>
    <property type="match status" value="1"/>
</dbReference>
<dbReference type="InterPro" id="IPR001542">
    <property type="entry name" value="Defensin_invertebrate/fungal"/>
</dbReference>
<dbReference type="InterPro" id="IPR036574">
    <property type="entry name" value="Scorpion_toxin-like_sf"/>
</dbReference>
<dbReference type="PANTHER" id="PTHR13645">
    <property type="entry name" value="DEFENSIN"/>
    <property type="match status" value="1"/>
</dbReference>
<dbReference type="PANTHER" id="PTHR13645:SF0">
    <property type="entry name" value="DEFENSIN"/>
    <property type="match status" value="1"/>
</dbReference>
<dbReference type="Pfam" id="PF01097">
    <property type="entry name" value="Defensin_2"/>
    <property type="match status" value="1"/>
</dbReference>
<dbReference type="SUPFAM" id="SSF57095">
    <property type="entry name" value="Scorpion toxin-like"/>
    <property type="match status" value="1"/>
</dbReference>
<dbReference type="PROSITE" id="PS51378">
    <property type="entry name" value="INVERT_DEFENSINS"/>
    <property type="match status" value="1"/>
</dbReference>
<accession>Q5BU36</accession>
<comment type="function">
    <text evidence="1 3">Antibacterial peptide mostly active against Gram-positive bacteria.</text>
</comment>
<comment type="subcellular location">
    <subcellularLocation>
        <location evidence="1 3">Secreted</location>
    </subcellularLocation>
</comment>
<comment type="similarity">
    <text evidence="3">Belongs to the invertebrate defensin family. Type 1 subfamily.</text>
</comment>
<keyword id="KW-0044">Antibiotic</keyword>
<keyword id="KW-0929">Antimicrobial</keyword>
<keyword id="KW-0211">Defensin</keyword>
<keyword id="KW-1015">Disulfide bond</keyword>
<keyword id="KW-0391">Immunity</keyword>
<keyword id="KW-0399">Innate immunity</keyword>
<keyword id="KW-0964">Secreted</keyword>
<keyword id="KW-0732">Signal</keyword>
<evidence type="ECO:0000250" key="1">
    <source>
        <dbReference type="UniProtKB" id="P91793"/>
    </source>
</evidence>
<evidence type="ECO:0000255" key="2"/>
<evidence type="ECO:0000255" key="3">
    <source>
        <dbReference type="PROSITE-ProRule" id="PRU00710"/>
    </source>
</evidence>
<evidence type="ECO:0000312" key="4">
    <source>
        <dbReference type="EMBL" id="AAX20157.1"/>
    </source>
</evidence>
<name>DEF_FORAQ</name>
<sequence>MKNYVFALLVVTAVAIALPNEDKNAPMRVHLLPQKEDESLKLEVTPVKEHHRTRRFTCDLLSGAGVDHSACAAHCILRGKTGGRCNSDRVCVCRA</sequence>
<protein>
    <recommendedName>
        <fullName evidence="1">Defensin</fullName>
    </recommendedName>
</protein>